<protein>
    <recommendedName>
        <fullName evidence="1">Photosystem I reaction center subunit XII</fullName>
    </recommendedName>
    <alternativeName>
        <fullName evidence="1">PSI-M</fullName>
    </alternativeName>
</protein>
<name>PSAM_PROM9</name>
<feature type="chain" id="PRO_1000062714" description="Photosystem I reaction center subunit XII">
    <location>
        <begin position="1"/>
        <end position="34"/>
    </location>
</feature>
<feature type="transmembrane region" description="Helical" evidence="1">
    <location>
        <begin position="9"/>
        <end position="29"/>
    </location>
</feature>
<organism>
    <name type="scientific">Prochlorococcus marinus (strain MIT 9312)</name>
    <dbReference type="NCBI Taxonomy" id="74546"/>
    <lineage>
        <taxon>Bacteria</taxon>
        <taxon>Bacillati</taxon>
        <taxon>Cyanobacteriota</taxon>
        <taxon>Cyanophyceae</taxon>
        <taxon>Synechococcales</taxon>
        <taxon>Prochlorococcaceae</taxon>
        <taxon>Prochlorococcus</taxon>
    </lineage>
</organism>
<evidence type="ECO:0000255" key="1">
    <source>
        <dbReference type="HAMAP-Rule" id="MF_00828"/>
    </source>
</evidence>
<keyword id="KW-0472">Membrane</keyword>
<keyword id="KW-0602">Photosynthesis</keyword>
<keyword id="KW-0603">Photosystem I</keyword>
<keyword id="KW-0793">Thylakoid</keyword>
<keyword id="KW-0812">Transmembrane</keyword>
<keyword id="KW-1133">Transmembrane helix</keyword>
<reference key="1">
    <citation type="journal article" date="2006" name="Science">
        <title>Genomic islands and the ecology and evolution of Prochlorococcus.</title>
        <authorList>
            <person name="Coleman M.L."/>
            <person name="Sullivan M.B."/>
            <person name="Martiny A.C."/>
            <person name="Steglich C."/>
            <person name="Barry K."/>
            <person name="Delong E.F."/>
            <person name="Chisholm S.W."/>
        </authorList>
    </citation>
    <scope>NUCLEOTIDE SEQUENCE [LARGE SCALE GENOMIC DNA]</scope>
    <source>
        <strain>MIT 9312</strain>
    </source>
</reference>
<accession>Q31BZ4</accession>
<proteinExistence type="inferred from homology"/>
<dbReference type="EMBL" id="CP000111">
    <property type="protein sequence ID" value="ABB49601.1"/>
    <property type="molecule type" value="Genomic_DNA"/>
</dbReference>
<dbReference type="RefSeq" id="WP_011376099.1">
    <property type="nucleotide sequence ID" value="NC_007577.1"/>
</dbReference>
<dbReference type="SMR" id="Q31BZ4"/>
<dbReference type="STRING" id="74546.PMT9312_0540"/>
<dbReference type="KEGG" id="pmi:PMT9312_0540"/>
<dbReference type="HOGENOM" id="CLU_218031_0_0_3"/>
<dbReference type="OrthoDB" id="542072at2"/>
<dbReference type="Proteomes" id="UP000002715">
    <property type="component" value="Chromosome"/>
</dbReference>
<dbReference type="GO" id="GO:0009522">
    <property type="term" value="C:photosystem I"/>
    <property type="evidence" value="ECO:0007669"/>
    <property type="project" value="UniProtKB-KW"/>
</dbReference>
<dbReference type="GO" id="GO:0031676">
    <property type="term" value="C:plasma membrane-derived thylakoid membrane"/>
    <property type="evidence" value="ECO:0007669"/>
    <property type="project" value="UniProtKB-SubCell"/>
</dbReference>
<dbReference type="GO" id="GO:0015979">
    <property type="term" value="P:photosynthesis"/>
    <property type="evidence" value="ECO:0007669"/>
    <property type="project" value="UniProtKB-UniRule"/>
</dbReference>
<dbReference type="HAMAP" id="MF_00828">
    <property type="entry name" value="PSI_PsaM"/>
    <property type="match status" value="1"/>
</dbReference>
<dbReference type="InterPro" id="IPR010010">
    <property type="entry name" value="PSI_PsaM"/>
</dbReference>
<dbReference type="NCBIfam" id="TIGR03053">
    <property type="entry name" value="PS_I_psaM"/>
    <property type="match status" value="1"/>
</dbReference>
<sequence>MEPTQTINLIALSLIVVVHAGVLALRLGISLGRN</sequence>
<comment type="subcellular location">
    <subcellularLocation>
        <location evidence="1">Cellular thylakoid membrane</location>
        <topology evidence="1">Single-pass membrane protein</topology>
    </subcellularLocation>
</comment>
<comment type="similarity">
    <text evidence="1">Belongs to the PsaM family.</text>
</comment>
<gene>
    <name evidence="1" type="primary">psaM</name>
    <name type="ordered locus">PMT9312_0540</name>
</gene>